<feature type="chain" id="PRO_0000241572" description="Large ribosomal subunit protein uL24">
    <location>
        <begin position="1"/>
        <end position="106"/>
    </location>
</feature>
<gene>
    <name evidence="1" type="primary">rplX</name>
    <name type="ordered locus">BAV0045</name>
</gene>
<organism>
    <name type="scientific">Bordetella avium (strain 197N)</name>
    <dbReference type="NCBI Taxonomy" id="360910"/>
    <lineage>
        <taxon>Bacteria</taxon>
        <taxon>Pseudomonadati</taxon>
        <taxon>Pseudomonadota</taxon>
        <taxon>Betaproteobacteria</taxon>
        <taxon>Burkholderiales</taxon>
        <taxon>Alcaligenaceae</taxon>
        <taxon>Bordetella</taxon>
    </lineage>
</organism>
<comment type="function">
    <text evidence="1">One of two assembly initiator proteins, it binds directly to the 5'-end of the 23S rRNA, where it nucleates assembly of the 50S subunit.</text>
</comment>
<comment type="function">
    <text evidence="1">One of the proteins that surrounds the polypeptide exit tunnel on the outside of the subunit.</text>
</comment>
<comment type="subunit">
    <text evidence="1">Part of the 50S ribosomal subunit.</text>
</comment>
<comment type="similarity">
    <text evidence="1">Belongs to the universal ribosomal protein uL24 family.</text>
</comment>
<dbReference type="EMBL" id="AM167904">
    <property type="protein sequence ID" value="CAJ47629.1"/>
    <property type="molecule type" value="Genomic_DNA"/>
</dbReference>
<dbReference type="RefSeq" id="WP_012415751.1">
    <property type="nucleotide sequence ID" value="NC_010645.1"/>
</dbReference>
<dbReference type="SMR" id="Q2L282"/>
<dbReference type="STRING" id="360910.BAV0045"/>
<dbReference type="GeneID" id="92936710"/>
<dbReference type="KEGG" id="bav:BAV0045"/>
<dbReference type="eggNOG" id="COG0198">
    <property type="taxonomic scope" value="Bacteria"/>
</dbReference>
<dbReference type="HOGENOM" id="CLU_093315_2_2_4"/>
<dbReference type="OrthoDB" id="9807419at2"/>
<dbReference type="Proteomes" id="UP000001977">
    <property type="component" value="Chromosome"/>
</dbReference>
<dbReference type="GO" id="GO:1990904">
    <property type="term" value="C:ribonucleoprotein complex"/>
    <property type="evidence" value="ECO:0007669"/>
    <property type="project" value="UniProtKB-KW"/>
</dbReference>
<dbReference type="GO" id="GO:0005840">
    <property type="term" value="C:ribosome"/>
    <property type="evidence" value="ECO:0007669"/>
    <property type="project" value="UniProtKB-KW"/>
</dbReference>
<dbReference type="GO" id="GO:0019843">
    <property type="term" value="F:rRNA binding"/>
    <property type="evidence" value="ECO:0007669"/>
    <property type="project" value="UniProtKB-UniRule"/>
</dbReference>
<dbReference type="GO" id="GO:0003735">
    <property type="term" value="F:structural constituent of ribosome"/>
    <property type="evidence" value="ECO:0007669"/>
    <property type="project" value="InterPro"/>
</dbReference>
<dbReference type="GO" id="GO:0006412">
    <property type="term" value="P:translation"/>
    <property type="evidence" value="ECO:0007669"/>
    <property type="project" value="UniProtKB-UniRule"/>
</dbReference>
<dbReference type="CDD" id="cd06089">
    <property type="entry name" value="KOW_RPL26"/>
    <property type="match status" value="1"/>
</dbReference>
<dbReference type="FunFam" id="2.30.30.30:FF:000004">
    <property type="entry name" value="50S ribosomal protein L24"/>
    <property type="match status" value="1"/>
</dbReference>
<dbReference type="Gene3D" id="2.30.30.30">
    <property type="match status" value="1"/>
</dbReference>
<dbReference type="HAMAP" id="MF_01326_B">
    <property type="entry name" value="Ribosomal_uL24_B"/>
    <property type="match status" value="1"/>
</dbReference>
<dbReference type="InterPro" id="IPR014722">
    <property type="entry name" value="Rib_uL2_dom2"/>
</dbReference>
<dbReference type="InterPro" id="IPR003256">
    <property type="entry name" value="Ribosomal_uL24"/>
</dbReference>
<dbReference type="InterPro" id="IPR005825">
    <property type="entry name" value="Ribosomal_uL24_CS"/>
</dbReference>
<dbReference type="InterPro" id="IPR041988">
    <property type="entry name" value="Ribosomal_uL24_KOW"/>
</dbReference>
<dbReference type="InterPro" id="IPR008991">
    <property type="entry name" value="Translation_prot_SH3-like_sf"/>
</dbReference>
<dbReference type="NCBIfam" id="TIGR01079">
    <property type="entry name" value="rplX_bact"/>
    <property type="match status" value="1"/>
</dbReference>
<dbReference type="PANTHER" id="PTHR12903">
    <property type="entry name" value="MITOCHONDRIAL RIBOSOMAL PROTEIN L24"/>
    <property type="match status" value="1"/>
</dbReference>
<dbReference type="Pfam" id="PF17136">
    <property type="entry name" value="ribosomal_L24"/>
    <property type="match status" value="1"/>
</dbReference>
<dbReference type="SUPFAM" id="SSF50104">
    <property type="entry name" value="Translation proteins SH3-like domain"/>
    <property type="match status" value="1"/>
</dbReference>
<dbReference type="PROSITE" id="PS01108">
    <property type="entry name" value="RIBOSOMAL_L24"/>
    <property type="match status" value="1"/>
</dbReference>
<evidence type="ECO:0000255" key="1">
    <source>
        <dbReference type="HAMAP-Rule" id="MF_01326"/>
    </source>
</evidence>
<evidence type="ECO:0000305" key="2"/>
<sequence>MNKILKGDEVIVLTGRDKKRRGVVLARVDADHVLVEGVNVVKKHQKANPMANNPGGIVEKTLPIHISNVALFNPATGKADRVGFKEEDGRKVRVFRSNGAAVGAKA</sequence>
<protein>
    <recommendedName>
        <fullName evidence="1">Large ribosomal subunit protein uL24</fullName>
    </recommendedName>
    <alternativeName>
        <fullName evidence="2">50S ribosomal protein L24</fullName>
    </alternativeName>
</protein>
<name>RL24_BORA1</name>
<keyword id="KW-1185">Reference proteome</keyword>
<keyword id="KW-0687">Ribonucleoprotein</keyword>
<keyword id="KW-0689">Ribosomal protein</keyword>
<keyword id="KW-0694">RNA-binding</keyword>
<keyword id="KW-0699">rRNA-binding</keyword>
<reference key="1">
    <citation type="journal article" date="2006" name="J. Bacteriol.">
        <title>Comparison of the genome sequence of the poultry pathogen Bordetella avium with those of B. bronchiseptica, B. pertussis, and B. parapertussis reveals extensive diversity in surface structures associated with host interaction.</title>
        <authorList>
            <person name="Sebaihia M."/>
            <person name="Preston A."/>
            <person name="Maskell D.J."/>
            <person name="Kuzmiak H."/>
            <person name="Connell T.D."/>
            <person name="King N.D."/>
            <person name="Orndorff P.E."/>
            <person name="Miyamoto D.M."/>
            <person name="Thomson N.R."/>
            <person name="Harris D."/>
            <person name="Goble A."/>
            <person name="Lord A."/>
            <person name="Murphy L."/>
            <person name="Quail M.A."/>
            <person name="Rutter S."/>
            <person name="Squares R."/>
            <person name="Squares S."/>
            <person name="Woodward J."/>
            <person name="Parkhill J."/>
            <person name="Temple L.M."/>
        </authorList>
    </citation>
    <scope>NUCLEOTIDE SEQUENCE [LARGE SCALE GENOMIC DNA]</scope>
    <source>
        <strain>197N</strain>
    </source>
</reference>
<accession>Q2L282</accession>
<proteinExistence type="inferred from homology"/>